<keyword id="KW-0067">ATP-binding</keyword>
<keyword id="KW-0436">Ligase</keyword>
<keyword id="KW-0547">Nucleotide-binding</keyword>
<keyword id="KW-0658">Purine biosynthesis</keyword>
<keyword id="KW-1185">Reference proteome</keyword>
<sequence>MQKKAELYRGKAKTVYTTDDPDLLVLEFRNDTSALDGERIEQFDRKGMVNNKFNHFIMSKLAEAGIPTQMERLLSDTEVLVKKLDMVPVECVVRNRAAGSLVRRLGIEEGLVLNPPLFDLFLKNDAKHDPMVNESYCETFGWVSKEHLAEMKELSLKANEVLSKLFDDAGLILVDFKLEFGLFKGQIVLGDEFSPDGSRLWDKETLDKMDKDRFRQSLGGLIEAYEEVARRIGVILD</sequence>
<reference key="1">
    <citation type="journal article" date="2003" name="Nat. Biotechnol.">
        <title>The genome sequence of the entomopathogenic bacterium Photorhabdus luminescens.</title>
        <authorList>
            <person name="Duchaud E."/>
            <person name="Rusniok C."/>
            <person name="Frangeul L."/>
            <person name="Buchrieser C."/>
            <person name="Givaudan A."/>
            <person name="Taourit S."/>
            <person name="Bocs S."/>
            <person name="Boursaux-Eude C."/>
            <person name="Chandler M."/>
            <person name="Charles J.-F."/>
            <person name="Dassa E."/>
            <person name="Derose R."/>
            <person name="Derzelle S."/>
            <person name="Freyssinet G."/>
            <person name="Gaudriault S."/>
            <person name="Medigue C."/>
            <person name="Lanois A."/>
            <person name="Powell K."/>
            <person name="Siguier P."/>
            <person name="Vincent R."/>
            <person name="Wingate V."/>
            <person name="Zouine M."/>
            <person name="Glaser P."/>
            <person name="Boemare N."/>
            <person name="Danchin A."/>
            <person name="Kunst F."/>
        </authorList>
    </citation>
    <scope>NUCLEOTIDE SEQUENCE [LARGE SCALE GENOMIC DNA]</scope>
    <source>
        <strain>DSM 15139 / CIP 105565 / TT01</strain>
    </source>
</reference>
<proteinExistence type="inferred from homology"/>
<name>PUR7_PHOLL</name>
<accession>Q7N3H3</accession>
<comment type="catalytic activity">
    <reaction evidence="1">
        <text>5-amino-1-(5-phospho-D-ribosyl)imidazole-4-carboxylate + L-aspartate + ATP = (2S)-2-[5-amino-1-(5-phospho-beta-D-ribosyl)imidazole-4-carboxamido]succinate + ADP + phosphate + 2 H(+)</text>
        <dbReference type="Rhea" id="RHEA:22628"/>
        <dbReference type="ChEBI" id="CHEBI:15378"/>
        <dbReference type="ChEBI" id="CHEBI:29991"/>
        <dbReference type="ChEBI" id="CHEBI:30616"/>
        <dbReference type="ChEBI" id="CHEBI:43474"/>
        <dbReference type="ChEBI" id="CHEBI:58443"/>
        <dbReference type="ChEBI" id="CHEBI:77657"/>
        <dbReference type="ChEBI" id="CHEBI:456216"/>
        <dbReference type="EC" id="6.3.2.6"/>
    </reaction>
</comment>
<comment type="pathway">
    <text evidence="1">Purine metabolism; IMP biosynthesis via de novo pathway; 5-amino-1-(5-phospho-D-ribosyl)imidazole-4-carboxamide from 5-amino-1-(5-phospho-D-ribosyl)imidazole-4-carboxylate: step 1/2.</text>
</comment>
<comment type="similarity">
    <text evidence="1">Belongs to the SAICAR synthetase family.</text>
</comment>
<dbReference type="EC" id="6.3.2.6" evidence="1"/>
<dbReference type="EMBL" id="BX571868">
    <property type="protein sequence ID" value="CAE15118.1"/>
    <property type="molecule type" value="Genomic_DNA"/>
</dbReference>
<dbReference type="RefSeq" id="WP_011146964.1">
    <property type="nucleotide sequence ID" value="NC_005126.1"/>
</dbReference>
<dbReference type="SMR" id="Q7N3H3"/>
<dbReference type="STRING" id="243265.plu2744"/>
<dbReference type="GeneID" id="48849005"/>
<dbReference type="KEGG" id="plu:plu2744"/>
<dbReference type="eggNOG" id="COG0152">
    <property type="taxonomic scope" value="Bacteria"/>
</dbReference>
<dbReference type="HOGENOM" id="CLU_061495_2_1_6"/>
<dbReference type="OrthoDB" id="9801549at2"/>
<dbReference type="UniPathway" id="UPA00074">
    <property type="reaction ID" value="UER00131"/>
</dbReference>
<dbReference type="Proteomes" id="UP000002514">
    <property type="component" value="Chromosome"/>
</dbReference>
<dbReference type="GO" id="GO:0005829">
    <property type="term" value="C:cytosol"/>
    <property type="evidence" value="ECO:0007669"/>
    <property type="project" value="TreeGrafter"/>
</dbReference>
<dbReference type="GO" id="GO:0005524">
    <property type="term" value="F:ATP binding"/>
    <property type="evidence" value="ECO:0007669"/>
    <property type="project" value="UniProtKB-KW"/>
</dbReference>
<dbReference type="GO" id="GO:0004639">
    <property type="term" value="F:phosphoribosylaminoimidazolesuccinocarboxamide synthase activity"/>
    <property type="evidence" value="ECO:0007669"/>
    <property type="project" value="UniProtKB-UniRule"/>
</dbReference>
<dbReference type="GO" id="GO:0006189">
    <property type="term" value="P:'de novo' IMP biosynthetic process"/>
    <property type="evidence" value="ECO:0007669"/>
    <property type="project" value="UniProtKB-UniRule"/>
</dbReference>
<dbReference type="GO" id="GO:0009236">
    <property type="term" value="P:cobalamin biosynthetic process"/>
    <property type="evidence" value="ECO:0007669"/>
    <property type="project" value="InterPro"/>
</dbReference>
<dbReference type="CDD" id="cd01415">
    <property type="entry name" value="SAICAR_synt_PurC"/>
    <property type="match status" value="1"/>
</dbReference>
<dbReference type="FunFam" id="3.30.200.20:FF:000086">
    <property type="entry name" value="Phosphoribosylaminoimidazole-succinocarboxamide synthase"/>
    <property type="match status" value="1"/>
</dbReference>
<dbReference type="FunFam" id="3.30.470.20:FF:000006">
    <property type="entry name" value="Phosphoribosylaminoimidazole-succinocarboxamide synthase"/>
    <property type="match status" value="1"/>
</dbReference>
<dbReference type="Gene3D" id="3.30.470.20">
    <property type="entry name" value="ATP-grasp fold, B domain"/>
    <property type="match status" value="1"/>
</dbReference>
<dbReference type="Gene3D" id="3.30.200.20">
    <property type="entry name" value="Phosphorylase Kinase, domain 1"/>
    <property type="match status" value="1"/>
</dbReference>
<dbReference type="HAMAP" id="MF_00137">
    <property type="entry name" value="SAICAR_synth"/>
    <property type="match status" value="1"/>
</dbReference>
<dbReference type="InterPro" id="IPR028923">
    <property type="entry name" value="SAICAR_synt/ADE2_N"/>
</dbReference>
<dbReference type="InterPro" id="IPR033934">
    <property type="entry name" value="SAICAR_synt_PurC"/>
</dbReference>
<dbReference type="InterPro" id="IPR001636">
    <property type="entry name" value="SAICAR_synth"/>
</dbReference>
<dbReference type="InterPro" id="IPR050089">
    <property type="entry name" value="SAICAR_synthetase"/>
</dbReference>
<dbReference type="InterPro" id="IPR018236">
    <property type="entry name" value="SAICAR_synthetase_CS"/>
</dbReference>
<dbReference type="NCBIfam" id="TIGR00081">
    <property type="entry name" value="purC"/>
    <property type="match status" value="1"/>
</dbReference>
<dbReference type="PANTHER" id="PTHR43599">
    <property type="entry name" value="MULTIFUNCTIONAL PROTEIN ADE2"/>
    <property type="match status" value="1"/>
</dbReference>
<dbReference type="PANTHER" id="PTHR43599:SF3">
    <property type="entry name" value="SI:DKEY-6E2.2"/>
    <property type="match status" value="1"/>
</dbReference>
<dbReference type="Pfam" id="PF01259">
    <property type="entry name" value="SAICAR_synt"/>
    <property type="match status" value="1"/>
</dbReference>
<dbReference type="SUPFAM" id="SSF56104">
    <property type="entry name" value="SAICAR synthase-like"/>
    <property type="match status" value="1"/>
</dbReference>
<dbReference type="PROSITE" id="PS01057">
    <property type="entry name" value="SAICAR_SYNTHETASE_1"/>
    <property type="match status" value="1"/>
</dbReference>
<dbReference type="PROSITE" id="PS01058">
    <property type="entry name" value="SAICAR_SYNTHETASE_2"/>
    <property type="match status" value="1"/>
</dbReference>
<feature type="chain" id="PRO_0000100850" description="Phosphoribosylaminoimidazole-succinocarboxamide synthase">
    <location>
        <begin position="1"/>
        <end position="237"/>
    </location>
</feature>
<organism>
    <name type="scientific">Photorhabdus laumondii subsp. laumondii (strain DSM 15139 / CIP 105565 / TT01)</name>
    <name type="common">Photorhabdus luminescens subsp. laumondii</name>
    <dbReference type="NCBI Taxonomy" id="243265"/>
    <lineage>
        <taxon>Bacteria</taxon>
        <taxon>Pseudomonadati</taxon>
        <taxon>Pseudomonadota</taxon>
        <taxon>Gammaproteobacteria</taxon>
        <taxon>Enterobacterales</taxon>
        <taxon>Morganellaceae</taxon>
        <taxon>Photorhabdus</taxon>
    </lineage>
</organism>
<gene>
    <name evidence="1" type="primary">purC</name>
    <name type="ordered locus">plu2744</name>
</gene>
<protein>
    <recommendedName>
        <fullName evidence="1">Phosphoribosylaminoimidazole-succinocarboxamide synthase</fullName>
        <ecNumber evidence="1">6.3.2.6</ecNumber>
    </recommendedName>
    <alternativeName>
        <fullName evidence="1">SAICAR synthetase</fullName>
    </alternativeName>
</protein>
<evidence type="ECO:0000255" key="1">
    <source>
        <dbReference type="HAMAP-Rule" id="MF_00137"/>
    </source>
</evidence>